<accession>A1RVQ8</accession>
<organism>
    <name type="scientific">Pyrobaculum islandicum (strain DSM 4184 / JCM 9189 / GEO3)</name>
    <dbReference type="NCBI Taxonomy" id="384616"/>
    <lineage>
        <taxon>Archaea</taxon>
        <taxon>Thermoproteota</taxon>
        <taxon>Thermoprotei</taxon>
        <taxon>Thermoproteales</taxon>
        <taxon>Thermoproteaceae</taxon>
        <taxon>Pyrobaculum</taxon>
    </lineage>
</organism>
<protein>
    <recommendedName>
        <fullName evidence="1">tRNA N6-adenosine threonylcarbamoyltransferase</fullName>
        <ecNumber evidence="1">2.3.1.234</ecNumber>
    </recommendedName>
    <alternativeName>
        <fullName evidence="1">N6-L-threonylcarbamoyladenine synthase</fullName>
        <shortName evidence="1">t(6)A synthase</shortName>
    </alternativeName>
    <alternativeName>
        <fullName evidence="1">t(6)A37 threonylcarbamoyladenosine biosynthesis protein Kae1</fullName>
    </alternativeName>
    <alternativeName>
        <fullName evidence="1">tRNA threonylcarbamoyladenosine biosynthesis protein Kae1</fullName>
    </alternativeName>
</protein>
<feature type="chain" id="PRO_0000303640" description="tRNA N6-adenosine threonylcarbamoyltransferase">
    <location>
        <begin position="1"/>
        <end position="333"/>
    </location>
</feature>
<feature type="binding site" evidence="1">
    <location>
        <position position="108"/>
    </location>
    <ligand>
        <name>Fe cation</name>
        <dbReference type="ChEBI" id="CHEBI:24875"/>
    </ligand>
</feature>
<feature type="binding site" evidence="1">
    <location>
        <position position="112"/>
    </location>
    <ligand>
        <name>Fe cation</name>
        <dbReference type="ChEBI" id="CHEBI:24875"/>
    </ligand>
</feature>
<feature type="binding site" evidence="1">
    <location>
        <begin position="129"/>
        <end position="133"/>
    </location>
    <ligand>
        <name>substrate</name>
    </ligand>
</feature>
<feature type="binding site" evidence="1">
    <location>
        <position position="161"/>
    </location>
    <ligand>
        <name>substrate</name>
    </ligand>
</feature>
<feature type="binding site" evidence="1">
    <location>
        <position position="178"/>
    </location>
    <ligand>
        <name>substrate</name>
    </ligand>
</feature>
<feature type="binding site" evidence="1">
    <location>
        <position position="258"/>
    </location>
    <ligand>
        <name>substrate</name>
    </ligand>
</feature>
<feature type="binding site" evidence="1">
    <location>
        <position position="286"/>
    </location>
    <ligand>
        <name>Fe cation</name>
        <dbReference type="ChEBI" id="CHEBI:24875"/>
    </ligand>
</feature>
<keyword id="KW-0012">Acyltransferase</keyword>
<keyword id="KW-0963">Cytoplasm</keyword>
<keyword id="KW-0408">Iron</keyword>
<keyword id="KW-0479">Metal-binding</keyword>
<keyword id="KW-0808">Transferase</keyword>
<keyword id="KW-0819">tRNA processing</keyword>
<comment type="function">
    <text evidence="1">Required for the formation of a threonylcarbamoyl group on adenosine at position 37 (t(6)A37) in tRNAs that read codons beginning with adenine. Is probably involved in the transfer of the threonylcarbamoyl moiety of threonylcarbamoyl-AMP (TC-AMP) to the N6 group of A37.</text>
</comment>
<comment type="catalytic activity">
    <reaction evidence="1">
        <text>L-threonylcarbamoyladenylate + adenosine(37) in tRNA = N(6)-L-threonylcarbamoyladenosine(37) in tRNA + AMP + H(+)</text>
        <dbReference type="Rhea" id="RHEA:37059"/>
        <dbReference type="Rhea" id="RHEA-COMP:10162"/>
        <dbReference type="Rhea" id="RHEA-COMP:10163"/>
        <dbReference type="ChEBI" id="CHEBI:15378"/>
        <dbReference type="ChEBI" id="CHEBI:73682"/>
        <dbReference type="ChEBI" id="CHEBI:74411"/>
        <dbReference type="ChEBI" id="CHEBI:74418"/>
        <dbReference type="ChEBI" id="CHEBI:456215"/>
        <dbReference type="EC" id="2.3.1.234"/>
    </reaction>
</comment>
<comment type="cofactor">
    <cofactor evidence="1">
        <name>Fe(2+)</name>
        <dbReference type="ChEBI" id="CHEBI:29033"/>
    </cofactor>
    <text evidence="1">Binds 1 Fe(2+) ion per subunit.</text>
</comment>
<comment type="subcellular location">
    <subcellularLocation>
        <location evidence="1">Cytoplasm</location>
    </subcellularLocation>
</comment>
<comment type="similarity">
    <text evidence="1">Belongs to the KAE1 / TsaD family.</text>
</comment>
<evidence type="ECO:0000255" key="1">
    <source>
        <dbReference type="HAMAP-Rule" id="MF_01446"/>
    </source>
</evidence>
<gene>
    <name evidence="1" type="primary">kae1</name>
    <name type="ordered locus">Pisl_1893</name>
</gene>
<proteinExistence type="inferred from homology"/>
<reference key="1">
    <citation type="submission" date="2006-12" db="EMBL/GenBank/DDBJ databases">
        <title>Complete sequence of Pyrobaculum islandicum DSM 4184.</title>
        <authorList>
            <person name="Copeland A."/>
            <person name="Lucas S."/>
            <person name="Lapidus A."/>
            <person name="Barry K."/>
            <person name="Detter J.C."/>
            <person name="Glavina del Rio T."/>
            <person name="Dalin E."/>
            <person name="Tice H."/>
            <person name="Pitluck S."/>
            <person name="Meincke L."/>
            <person name="Brettin T."/>
            <person name="Bruce D."/>
            <person name="Han C."/>
            <person name="Tapia R."/>
            <person name="Gilna P."/>
            <person name="Schmutz J."/>
            <person name="Larimer F."/>
            <person name="Land M."/>
            <person name="Hauser L."/>
            <person name="Kyrpides N."/>
            <person name="Mikhailova N."/>
            <person name="Cozen A.E."/>
            <person name="Fitz-Gibbon S.T."/>
            <person name="House C.H."/>
            <person name="Saltikov C."/>
            <person name="Lowe T."/>
            <person name="Richardson P."/>
        </authorList>
    </citation>
    <scope>NUCLEOTIDE SEQUENCE [LARGE SCALE GENOMIC DNA]</scope>
    <source>
        <strain>DSM 4184 / JCM 9189 / GEO3</strain>
    </source>
</reference>
<sequence length="333" mass="35474">MLVLGIESTAHTFSIGIVKDGKILSQLGKTYIPPSGAGIHPREAAEHHARHAPAILRQLLDMLGLALSDVDVVAYAAGPGLGPALRIGAVLARALAIKLGIPLVPVHHGVAHIEVARYTTNACDPLVVLVSGGHTVITGYSDGRYRVFGETLDVAIGNAIDVFAREVGLGFPGVPAVEKCAEAADTVVAFPMPIIGQDLSYAGLVTHALQLVKSGTPLPVVCKSLIETAYYMLAEVVERALAYTKKKEVVVAGGVARSKRLREILSAASGEHDAVVKIVPDEYAGDNGAMIALTGYYAYKHGIYTTPEQSFVKQRWRLDNVDVPWFYDLCNPH</sequence>
<dbReference type="EC" id="2.3.1.234" evidence="1"/>
<dbReference type="EMBL" id="CP000504">
    <property type="protein sequence ID" value="ABL89040.1"/>
    <property type="molecule type" value="Genomic_DNA"/>
</dbReference>
<dbReference type="RefSeq" id="WP_011763615.1">
    <property type="nucleotide sequence ID" value="NC_008701.1"/>
</dbReference>
<dbReference type="SMR" id="A1RVQ8"/>
<dbReference type="STRING" id="384616.Pisl_1893"/>
<dbReference type="GeneID" id="4617674"/>
<dbReference type="KEGG" id="pis:Pisl_1893"/>
<dbReference type="eggNOG" id="arCOG01183">
    <property type="taxonomic scope" value="Archaea"/>
</dbReference>
<dbReference type="HOGENOM" id="CLU_023208_2_2_2"/>
<dbReference type="OrthoDB" id="6818at2157"/>
<dbReference type="Proteomes" id="UP000002595">
    <property type="component" value="Chromosome"/>
</dbReference>
<dbReference type="GO" id="GO:0005737">
    <property type="term" value="C:cytoplasm"/>
    <property type="evidence" value="ECO:0007669"/>
    <property type="project" value="UniProtKB-SubCell"/>
</dbReference>
<dbReference type="GO" id="GO:0000408">
    <property type="term" value="C:EKC/KEOPS complex"/>
    <property type="evidence" value="ECO:0007669"/>
    <property type="project" value="InterPro"/>
</dbReference>
<dbReference type="GO" id="GO:0005506">
    <property type="term" value="F:iron ion binding"/>
    <property type="evidence" value="ECO:0007669"/>
    <property type="project" value="UniProtKB-UniRule"/>
</dbReference>
<dbReference type="GO" id="GO:0061711">
    <property type="term" value="F:N(6)-L-threonylcarbamoyladenine synthase activity"/>
    <property type="evidence" value="ECO:0007669"/>
    <property type="project" value="UniProtKB-EC"/>
</dbReference>
<dbReference type="GO" id="GO:0002949">
    <property type="term" value="P:tRNA threonylcarbamoyladenosine modification"/>
    <property type="evidence" value="ECO:0007669"/>
    <property type="project" value="UniProtKB-UniRule"/>
</dbReference>
<dbReference type="CDD" id="cd24131">
    <property type="entry name" value="ASKHA_NBD_Kae1_arch_bac"/>
    <property type="match status" value="1"/>
</dbReference>
<dbReference type="FunFam" id="3.30.420.40:FF:000037">
    <property type="entry name" value="Probable tRNA N6-adenosine threonylcarbamoyltransferase"/>
    <property type="match status" value="1"/>
</dbReference>
<dbReference type="Gene3D" id="3.30.420.40">
    <property type="match status" value="2"/>
</dbReference>
<dbReference type="HAMAP" id="MF_01446">
    <property type="entry name" value="Kae1"/>
    <property type="match status" value="1"/>
</dbReference>
<dbReference type="InterPro" id="IPR043129">
    <property type="entry name" value="ATPase_NBD"/>
</dbReference>
<dbReference type="InterPro" id="IPR000905">
    <property type="entry name" value="Gcp-like_dom"/>
</dbReference>
<dbReference type="InterPro" id="IPR017861">
    <property type="entry name" value="KAE1/TsaD"/>
</dbReference>
<dbReference type="InterPro" id="IPR034680">
    <property type="entry name" value="Kae1_archaea_euk"/>
</dbReference>
<dbReference type="InterPro" id="IPR017860">
    <property type="entry name" value="Peptidase_M22_CS"/>
</dbReference>
<dbReference type="NCBIfam" id="TIGR03722">
    <property type="entry name" value="arch_KAE1"/>
    <property type="match status" value="1"/>
</dbReference>
<dbReference type="NCBIfam" id="TIGR00329">
    <property type="entry name" value="gcp_kae1"/>
    <property type="match status" value="1"/>
</dbReference>
<dbReference type="PANTHER" id="PTHR11735">
    <property type="entry name" value="TRNA N6-ADENOSINE THREONYLCARBAMOYLTRANSFERASE"/>
    <property type="match status" value="1"/>
</dbReference>
<dbReference type="PANTHER" id="PTHR11735:SF14">
    <property type="entry name" value="TRNA N6-ADENOSINE THREONYLCARBAMOYLTRANSFERASE"/>
    <property type="match status" value="1"/>
</dbReference>
<dbReference type="Pfam" id="PF00814">
    <property type="entry name" value="TsaD"/>
    <property type="match status" value="1"/>
</dbReference>
<dbReference type="PRINTS" id="PR00789">
    <property type="entry name" value="OSIALOPTASE"/>
</dbReference>
<dbReference type="SUPFAM" id="SSF53067">
    <property type="entry name" value="Actin-like ATPase domain"/>
    <property type="match status" value="1"/>
</dbReference>
<dbReference type="PROSITE" id="PS01016">
    <property type="entry name" value="GLYCOPROTEASE"/>
    <property type="match status" value="1"/>
</dbReference>
<name>KAE1_PYRIL</name>